<feature type="chain" id="PRO_0000428402" description="Uncharacterized membrane protein MT2795">
    <location>
        <begin position="1"/>
        <end position="397"/>
    </location>
</feature>
<feature type="transmembrane region" description="Helical" evidence="1">
    <location>
        <begin position="1"/>
        <end position="21"/>
    </location>
</feature>
<feature type="transmembrane region" description="Helical" evidence="1">
    <location>
        <begin position="39"/>
        <end position="59"/>
    </location>
</feature>
<feature type="transmembrane region" description="Helical" evidence="1">
    <location>
        <begin position="76"/>
        <end position="96"/>
    </location>
</feature>
<feature type="transmembrane region" description="Helical" evidence="1">
    <location>
        <begin position="103"/>
        <end position="123"/>
    </location>
</feature>
<feature type="transmembrane region" description="Helical" evidence="1">
    <location>
        <begin position="124"/>
        <end position="144"/>
    </location>
</feature>
<feature type="transmembrane region" description="Helical" evidence="1">
    <location>
        <begin position="194"/>
        <end position="214"/>
    </location>
</feature>
<feature type="transmembrane region" description="Helical" evidence="1">
    <location>
        <begin position="219"/>
        <end position="239"/>
    </location>
</feature>
<feature type="transmembrane region" description="Helical" evidence="1">
    <location>
        <begin position="255"/>
        <end position="275"/>
    </location>
</feature>
<feature type="transmembrane region" description="Helical" evidence="1">
    <location>
        <begin position="301"/>
        <end position="321"/>
    </location>
</feature>
<evidence type="ECO:0000255" key="1"/>
<evidence type="ECO:0000305" key="2"/>
<protein>
    <recommendedName>
        <fullName>Uncharacterized membrane protein MT2795</fullName>
    </recommendedName>
</protein>
<sequence length="397" mass="43709">MGASGLVWTLTIVLIAGLMLVDYVLHVRKTHVPTLRQAVIQSATFVGIAILFGIAVVVFGGSELAVEYFACYLTDEALSVDNLFVFLVIISSFGVPRLAQQKVLLFGIAFALVTRTGFIFVGAALIENFNSAFYLFGLVLLVMAGNLARPTGLESRDAETLKRSVIIRLADRFLRTSQDYNGDRLFTVSNNKRMMTPLLLVMIAVGGTDILFAFDSIPALFGLTQNVYLVFAATAFSLLGLRQLYFLIDSLLDRLVYLSYGLAVILGFIGVKLMLEALHDNKIPFINGGKPVPTVEVSTTQSLTVIIIVLLITTAASFWSARGRAQNAMARARRYATAYLDLHYETESAERDKIFTALLAAERQINTLPTKYRMQPGQDDDLMTLLCRAHAARDAHM</sequence>
<reference key="1">
    <citation type="journal article" date="2002" name="J. Bacteriol.">
        <title>Whole-genome comparison of Mycobacterium tuberculosis clinical and laboratory strains.</title>
        <authorList>
            <person name="Fleischmann R.D."/>
            <person name="Alland D."/>
            <person name="Eisen J.A."/>
            <person name="Carpenter L."/>
            <person name="White O."/>
            <person name="Peterson J.D."/>
            <person name="DeBoy R.T."/>
            <person name="Dodson R.J."/>
            <person name="Gwinn M.L."/>
            <person name="Haft D.H."/>
            <person name="Hickey E.K."/>
            <person name="Kolonay J.F."/>
            <person name="Nelson W.C."/>
            <person name="Umayam L.A."/>
            <person name="Ermolaeva M.D."/>
            <person name="Salzberg S.L."/>
            <person name="Delcher A."/>
            <person name="Utterback T.R."/>
            <person name="Weidman J.F."/>
            <person name="Khouri H.M."/>
            <person name="Gill J."/>
            <person name="Mikula A."/>
            <person name="Bishai W."/>
            <person name="Jacobs W.R. Jr."/>
            <person name="Venter J.C."/>
            <person name="Fraser C.M."/>
        </authorList>
    </citation>
    <scope>NUCLEOTIDE SEQUENCE [LARGE SCALE GENOMIC DNA]</scope>
    <source>
        <strain>CDC 1551 / Oshkosh</strain>
    </source>
</reference>
<gene>
    <name type="ordered locus">MT2795</name>
</gene>
<keyword id="KW-1003">Cell membrane</keyword>
<keyword id="KW-0472">Membrane</keyword>
<keyword id="KW-1185">Reference proteome</keyword>
<keyword id="KW-0812">Transmembrane</keyword>
<keyword id="KW-1133">Transmembrane helix</keyword>
<dbReference type="EMBL" id="AE000516">
    <property type="protein sequence ID" value="AAK47112.1"/>
    <property type="molecule type" value="Genomic_DNA"/>
</dbReference>
<dbReference type="PIR" id="B70505">
    <property type="entry name" value="B70505"/>
</dbReference>
<dbReference type="RefSeq" id="WP_003917674.1">
    <property type="nucleotide sequence ID" value="NZ_KK341227.1"/>
</dbReference>
<dbReference type="KEGG" id="mtc:MT2795"/>
<dbReference type="PATRIC" id="fig|83331.31.peg.3010"/>
<dbReference type="HOGENOM" id="CLU_045644_0_1_11"/>
<dbReference type="Proteomes" id="UP000001020">
    <property type="component" value="Chromosome"/>
</dbReference>
<dbReference type="GO" id="GO:0005886">
    <property type="term" value="C:plasma membrane"/>
    <property type="evidence" value="ECO:0007669"/>
    <property type="project" value="UniProtKB-SubCell"/>
</dbReference>
<dbReference type="InterPro" id="IPR005496">
    <property type="entry name" value="Integral_membrane_TerC"/>
</dbReference>
<dbReference type="InterPro" id="IPR022369">
    <property type="entry name" value="Integral_membrane_TerC_rswitch"/>
</dbReference>
<dbReference type="NCBIfam" id="TIGR03718">
    <property type="entry name" value="R_switched_Alx"/>
    <property type="match status" value="1"/>
</dbReference>
<dbReference type="PANTHER" id="PTHR30238">
    <property type="entry name" value="MEMBRANE BOUND PREDICTED REDOX MODULATOR"/>
    <property type="match status" value="1"/>
</dbReference>
<dbReference type="PANTHER" id="PTHR30238:SF0">
    <property type="entry name" value="THYLAKOID MEMBRANE PROTEIN TERC, CHLOROPLASTIC"/>
    <property type="match status" value="1"/>
</dbReference>
<dbReference type="Pfam" id="PF03741">
    <property type="entry name" value="TerC"/>
    <property type="match status" value="1"/>
</dbReference>
<name>Y2723_MYCTO</name>
<comment type="subcellular location">
    <subcellularLocation>
        <location evidence="2">Cell membrane</location>
        <topology evidence="2">Multi-pass membrane protein</topology>
    </subcellularLocation>
</comment>
<comment type="similarity">
    <text evidence="2">Belongs to the TerC family.</text>
</comment>
<organism>
    <name type="scientific">Mycobacterium tuberculosis (strain CDC 1551 / Oshkosh)</name>
    <dbReference type="NCBI Taxonomy" id="83331"/>
    <lineage>
        <taxon>Bacteria</taxon>
        <taxon>Bacillati</taxon>
        <taxon>Actinomycetota</taxon>
        <taxon>Actinomycetes</taxon>
        <taxon>Mycobacteriales</taxon>
        <taxon>Mycobacteriaceae</taxon>
        <taxon>Mycobacterium</taxon>
        <taxon>Mycobacterium tuberculosis complex</taxon>
    </lineage>
</organism>
<accession>P9WG92</accession>
<accession>L0TAP4</accession>
<accession>O33228</accession>
<accession>P0A614</accession>
<proteinExistence type="inferred from homology"/>